<name>REX_STRE4</name>
<comment type="function">
    <text evidence="1">Modulates transcription in response to changes in cellular NADH/NAD(+) redox state.</text>
</comment>
<comment type="subunit">
    <text evidence="1">Homodimer.</text>
</comment>
<comment type="subcellular location">
    <subcellularLocation>
        <location evidence="1">Cytoplasm</location>
    </subcellularLocation>
</comment>
<comment type="similarity">
    <text evidence="1">Belongs to the transcriptional regulatory Rex family.</text>
</comment>
<reference key="1">
    <citation type="journal article" date="2009" name="PLoS Pathog.">
        <title>Genomic evidence for the evolution of Streptococcus equi: host restriction, increased virulence, and genetic exchange with human pathogens.</title>
        <authorList>
            <person name="Holden M.T.G."/>
            <person name="Heather Z."/>
            <person name="Paillot R."/>
            <person name="Steward K.F."/>
            <person name="Webb K."/>
            <person name="Ainslie F."/>
            <person name="Jourdan T."/>
            <person name="Bason N.C."/>
            <person name="Holroyd N.E."/>
            <person name="Mungall K."/>
            <person name="Quail M.A."/>
            <person name="Sanders M."/>
            <person name="Simmonds M."/>
            <person name="Willey D."/>
            <person name="Brooks K."/>
            <person name="Aanensen D.M."/>
            <person name="Spratt B.G."/>
            <person name="Jolley K.A."/>
            <person name="Maiden M.C.J."/>
            <person name="Kehoe M."/>
            <person name="Chanter N."/>
            <person name="Bentley S.D."/>
            <person name="Robinson C."/>
            <person name="Maskell D.J."/>
            <person name="Parkhill J."/>
            <person name="Waller A.S."/>
        </authorList>
    </citation>
    <scope>NUCLEOTIDE SEQUENCE [LARGE SCALE GENOMIC DNA]</scope>
    <source>
        <strain>4047</strain>
    </source>
</reference>
<accession>C0MA73</accession>
<dbReference type="EMBL" id="FM204883">
    <property type="protein sequence ID" value="CAW93816.1"/>
    <property type="molecule type" value="Genomic_DNA"/>
</dbReference>
<dbReference type="RefSeq" id="WP_012677911.1">
    <property type="nucleotide sequence ID" value="NC_012471.1"/>
</dbReference>
<dbReference type="SMR" id="C0MA73"/>
<dbReference type="KEGG" id="seu:SEQ_1138"/>
<dbReference type="HOGENOM" id="CLU_061534_1_1_9"/>
<dbReference type="OrthoDB" id="9784760at2"/>
<dbReference type="Proteomes" id="UP000001365">
    <property type="component" value="Chromosome"/>
</dbReference>
<dbReference type="GO" id="GO:0005737">
    <property type="term" value="C:cytoplasm"/>
    <property type="evidence" value="ECO:0007669"/>
    <property type="project" value="UniProtKB-SubCell"/>
</dbReference>
<dbReference type="GO" id="GO:0003677">
    <property type="term" value="F:DNA binding"/>
    <property type="evidence" value="ECO:0007669"/>
    <property type="project" value="UniProtKB-UniRule"/>
</dbReference>
<dbReference type="GO" id="GO:0003700">
    <property type="term" value="F:DNA-binding transcription factor activity"/>
    <property type="evidence" value="ECO:0007669"/>
    <property type="project" value="UniProtKB-UniRule"/>
</dbReference>
<dbReference type="GO" id="GO:0045892">
    <property type="term" value="P:negative regulation of DNA-templated transcription"/>
    <property type="evidence" value="ECO:0007669"/>
    <property type="project" value="InterPro"/>
</dbReference>
<dbReference type="GO" id="GO:0051775">
    <property type="term" value="P:response to redox state"/>
    <property type="evidence" value="ECO:0007669"/>
    <property type="project" value="InterPro"/>
</dbReference>
<dbReference type="Gene3D" id="3.40.50.720">
    <property type="entry name" value="NAD(P)-binding Rossmann-like Domain"/>
    <property type="match status" value="1"/>
</dbReference>
<dbReference type="Gene3D" id="1.10.10.10">
    <property type="entry name" value="Winged helix-like DNA-binding domain superfamily/Winged helix DNA-binding domain"/>
    <property type="match status" value="1"/>
</dbReference>
<dbReference type="HAMAP" id="MF_01131">
    <property type="entry name" value="Rex"/>
    <property type="match status" value="1"/>
</dbReference>
<dbReference type="InterPro" id="IPR003781">
    <property type="entry name" value="CoA-bd"/>
</dbReference>
<dbReference type="InterPro" id="IPR036291">
    <property type="entry name" value="NAD(P)-bd_dom_sf"/>
</dbReference>
<dbReference type="InterPro" id="IPR009718">
    <property type="entry name" value="Rex_DNA-bd_C_dom"/>
</dbReference>
<dbReference type="InterPro" id="IPR022876">
    <property type="entry name" value="Tscrpt_rep_Rex"/>
</dbReference>
<dbReference type="InterPro" id="IPR036388">
    <property type="entry name" value="WH-like_DNA-bd_sf"/>
</dbReference>
<dbReference type="InterPro" id="IPR036390">
    <property type="entry name" value="WH_DNA-bd_sf"/>
</dbReference>
<dbReference type="NCBIfam" id="NF003988">
    <property type="entry name" value="PRK05472.1-1"/>
    <property type="match status" value="1"/>
</dbReference>
<dbReference type="NCBIfam" id="NF003989">
    <property type="entry name" value="PRK05472.1-3"/>
    <property type="match status" value="1"/>
</dbReference>
<dbReference type="NCBIfam" id="NF003991">
    <property type="entry name" value="PRK05472.1-5"/>
    <property type="match status" value="1"/>
</dbReference>
<dbReference type="NCBIfam" id="NF003994">
    <property type="entry name" value="PRK05472.2-3"/>
    <property type="match status" value="1"/>
</dbReference>
<dbReference type="NCBIfam" id="NF003995">
    <property type="entry name" value="PRK05472.2-4"/>
    <property type="match status" value="1"/>
</dbReference>
<dbReference type="NCBIfam" id="NF003996">
    <property type="entry name" value="PRK05472.2-5"/>
    <property type="match status" value="1"/>
</dbReference>
<dbReference type="PANTHER" id="PTHR35786">
    <property type="entry name" value="REDOX-SENSING TRANSCRIPTIONAL REPRESSOR REX"/>
    <property type="match status" value="1"/>
</dbReference>
<dbReference type="PANTHER" id="PTHR35786:SF1">
    <property type="entry name" value="REDOX-SENSING TRANSCRIPTIONAL REPRESSOR REX 1"/>
    <property type="match status" value="1"/>
</dbReference>
<dbReference type="Pfam" id="PF02629">
    <property type="entry name" value="CoA_binding"/>
    <property type="match status" value="1"/>
</dbReference>
<dbReference type="Pfam" id="PF06971">
    <property type="entry name" value="Put_DNA-bind_N"/>
    <property type="match status" value="1"/>
</dbReference>
<dbReference type="SMART" id="SM00881">
    <property type="entry name" value="CoA_binding"/>
    <property type="match status" value="1"/>
</dbReference>
<dbReference type="SUPFAM" id="SSF51735">
    <property type="entry name" value="NAD(P)-binding Rossmann-fold domains"/>
    <property type="match status" value="1"/>
</dbReference>
<dbReference type="SUPFAM" id="SSF46785">
    <property type="entry name" value="Winged helix' DNA-binding domain"/>
    <property type="match status" value="1"/>
</dbReference>
<organism>
    <name type="scientific">Streptococcus equi subsp. equi (strain 4047)</name>
    <dbReference type="NCBI Taxonomy" id="553482"/>
    <lineage>
        <taxon>Bacteria</taxon>
        <taxon>Bacillati</taxon>
        <taxon>Bacillota</taxon>
        <taxon>Bacilli</taxon>
        <taxon>Lactobacillales</taxon>
        <taxon>Streptococcaceae</taxon>
        <taxon>Streptococcus</taxon>
    </lineage>
</organism>
<sequence>MVIDKSIPKATAKRLSLYYRIFKRFYADQVEKASSKQIADAMGIDSATVRRDFSYFGELGRRGFGYDVTKLMNFFADLLNDHSTTHVILVGCGNIGRALLHYRFHDRNKMQIVMGFDTDDNPMVGTKTPDDIPIYGISTIKEHLDNSGIETAILTVPSIYAQEVADQLIEAGIRGILSFAPLHLQVPKGVIVQSVDLTSELQTLLYFMNQNHLD</sequence>
<evidence type="ECO:0000255" key="1">
    <source>
        <dbReference type="HAMAP-Rule" id="MF_01131"/>
    </source>
</evidence>
<protein>
    <recommendedName>
        <fullName evidence="1">Redox-sensing transcriptional repressor Rex</fullName>
    </recommendedName>
</protein>
<feature type="chain" id="PRO_1000164085" description="Redox-sensing transcriptional repressor Rex">
    <location>
        <begin position="1"/>
        <end position="214"/>
    </location>
</feature>
<feature type="DNA-binding region" description="H-T-H motif" evidence="1">
    <location>
        <begin position="17"/>
        <end position="56"/>
    </location>
</feature>
<feature type="binding site" evidence="1">
    <location>
        <begin position="91"/>
        <end position="96"/>
    </location>
    <ligand>
        <name>NAD(+)</name>
        <dbReference type="ChEBI" id="CHEBI:57540"/>
    </ligand>
</feature>
<proteinExistence type="inferred from homology"/>
<keyword id="KW-0963">Cytoplasm</keyword>
<keyword id="KW-0238">DNA-binding</keyword>
<keyword id="KW-0520">NAD</keyword>
<keyword id="KW-0678">Repressor</keyword>
<keyword id="KW-0804">Transcription</keyword>
<keyword id="KW-0805">Transcription regulation</keyword>
<gene>
    <name evidence="1" type="primary">rex</name>
    <name type="ordered locus">SEQ_1138</name>
</gene>